<protein>
    <recommendedName>
        <fullName>Entry-fusion complex protein OPG094</fullName>
        <shortName>EFC protein OPG094</shortName>
    </recommendedName>
    <alternativeName>
        <fullName>Myristoylated protein G9</fullName>
    </alternativeName>
    <alternativeName>
        <fullName>Protein F1</fullName>
    </alternativeName>
</protein>
<organismHost>
    <name type="scientific">Bos taurus</name>
    <name type="common">Bovine</name>
    <dbReference type="NCBI Taxonomy" id="9913"/>
</organismHost>
<reference key="1">
    <citation type="submission" date="2003-02" db="EMBL/GenBank/DDBJ databases">
        <title>Sequencing of the coding region of Vaccinia-WR to an average 9-fold redundancy and an error rate of 0.16/10kb.</title>
        <authorList>
            <person name="Esposito J.J."/>
            <person name="Frace A.M."/>
            <person name="Sammons S.A."/>
            <person name="Olsen-Rasmussen M."/>
            <person name="Osborne J."/>
            <person name="Wohlhueter R."/>
        </authorList>
    </citation>
    <scope>NUCLEOTIDE SEQUENCE [LARGE SCALE GENOMIC DNA]</scope>
</reference>
<reference key="2">
    <citation type="journal article" date="1985" name="Nucleic Acids Res.">
        <title>Nucleotide sequence of a cluster of early and late genes in a conserved segment of the vaccinia virus genome.</title>
        <authorList>
            <person name="Plucienniczak A."/>
            <person name="Schroeder E."/>
            <person name="Zettlmeissl G."/>
            <person name="Streeck R.E."/>
        </authorList>
    </citation>
    <scope>NUCLEOTIDE SEQUENCE [GENOMIC DNA] OF 38-340</scope>
</reference>
<reference key="3">
    <citation type="journal article" date="1991" name="Virology">
        <title>Genetic and molecular biological characterization of a vaccinia virus gene which renders the virus dependent on isatin-beta-thiosemicarbazone (IBT).</title>
        <authorList>
            <person name="Meis R.J."/>
            <person name="Condit R.C."/>
        </authorList>
    </citation>
    <scope>NUCLEOTIDE SEQUENCE [GENOMIC DNA] OF 1-39</scope>
</reference>
<reference key="4">
    <citation type="journal article" date="1997" name="J. Virol.">
        <title>Identification and analysis of three myristylated vaccinia virus late proteins.</title>
        <authorList>
            <person name="Martin K.H."/>
            <person name="Grosenbach D.W."/>
            <person name="Franke C.A."/>
            <person name="Hruby D.E."/>
        </authorList>
    </citation>
    <scope>MYRISTOYLATION AT GLY-2</scope>
    <scope>MUTAGENESIS OF GLY-2</scope>
</reference>
<reference key="5">
    <citation type="journal article" date="2005" name="Proc. Natl. Acad. Sci. U.S.A.">
        <title>Poxvirus multiprotein entry-fusion complex.</title>
        <authorList>
            <person name="Senkevich T.G."/>
            <person name="Ojeda S."/>
            <person name="Townsley A."/>
            <person name="Nelson G.E."/>
            <person name="Moss B."/>
        </authorList>
    </citation>
    <scope>IDENTIFICATION IN A COMPLEX WITH A16; A21; A28; G3; H2; J5 AND L5</scope>
</reference>
<reference key="6">
    <citation type="journal article" date="2006" name="J. Virol.">
        <title>Vaccinia virus G9 protein is an essential component of the poxvirus entry-fusion complex.</title>
        <authorList>
            <person name="Ojeda S."/>
            <person name="Domi A."/>
            <person name="Moss B."/>
        </authorList>
    </citation>
    <scope>FUNCTION</scope>
    <scope>SUBCELLULAR LOCATION</scope>
</reference>
<reference key="7">
    <citation type="journal article" date="2008" name="J. Virol.">
        <title>Vaccinia virus A56/K2 fusion regulatory protein interacts with the A16 and G9 subunits of the entry fusion complex.</title>
        <authorList>
            <person name="Wagenaar T.R."/>
            <person name="Ojeda S."/>
            <person name="Moss B."/>
        </authorList>
    </citation>
    <scope>INTERACTION WITH A16</scope>
</reference>
<reference key="8">
    <citation type="journal article" date="2015" name="J. Virol.">
        <title>Deciphering poxvirus gene expression by RNA sequencing and ribosome profiling.</title>
        <authorList>
            <person name="Yang Z."/>
            <person name="Cao S."/>
            <person name="Martens C.A."/>
            <person name="Porcella S.F."/>
            <person name="Xie Z."/>
            <person name="Ma M."/>
            <person name="Shen B."/>
            <person name="Moss B."/>
        </authorList>
    </citation>
    <scope>INDUCTION</scope>
</reference>
<reference key="9">
    <citation type="journal article" date="2021" name="J. Virol.">
        <title>Insights into the Organization of the Poxvirus Multicomponent Entry-Fusion Complex from Proximity Analyses in Living Infected Cells.</title>
        <authorList>
            <person name="Schin A.M."/>
            <person name="Diesterbeck U.S."/>
            <person name="Moss B."/>
        </authorList>
    </citation>
    <scope>FUNCTION</scope>
</reference>
<dbReference type="EMBL" id="AY243312">
    <property type="protein sequence ID" value="AAO89366.1"/>
    <property type="molecule type" value="Genomic_DNA"/>
</dbReference>
<dbReference type="EMBL" id="X01978">
    <property type="protein sequence ID" value="CAA26009.1"/>
    <property type="molecule type" value="Genomic_DNA"/>
</dbReference>
<dbReference type="EMBL" id="J03399">
    <property type="protein sequence ID" value="AAB59820.1"/>
    <property type="molecule type" value="Genomic_DNA"/>
</dbReference>
<dbReference type="PIR" id="A23092">
    <property type="entry name" value="QQVZF1"/>
</dbReference>
<dbReference type="RefSeq" id="YP_232969.1">
    <property type="nucleotide sequence ID" value="NC_006998.1"/>
</dbReference>
<dbReference type="PDB" id="8GP6">
    <property type="method" value="X-ray"/>
    <property type="resolution" value="2.70 A"/>
    <property type="chains" value="B=1-319"/>
</dbReference>
<dbReference type="PDBsum" id="8GP6"/>
<dbReference type="SMR" id="P07611"/>
<dbReference type="IntAct" id="P07611">
    <property type="interactions" value="3"/>
</dbReference>
<dbReference type="MINT" id="P07611"/>
<dbReference type="TCDB" id="1.G.11.1.1">
    <property type="family name" value="the poxvirus cell entry protein complex (pep-c) family"/>
</dbReference>
<dbReference type="iPTMnet" id="P07611"/>
<dbReference type="DNASU" id="3707543"/>
<dbReference type="GeneID" id="3707543"/>
<dbReference type="KEGG" id="vg:3707543"/>
<dbReference type="Proteomes" id="UP000000344">
    <property type="component" value="Genome"/>
</dbReference>
<dbReference type="GO" id="GO:0016020">
    <property type="term" value="C:membrane"/>
    <property type="evidence" value="ECO:0007669"/>
    <property type="project" value="UniProtKB-KW"/>
</dbReference>
<dbReference type="GO" id="GO:0019031">
    <property type="term" value="C:viral envelope"/>
    <property type="evidence" value="ECO:0007669"/>
    <property type="project" value="UniProtKB-KW"/>
</dbReference>
<dbReference type="GO" id="GO:0055036">
    <property type="term" value="C:virion membrane"/>
    <property type="evidence" value="ECO:0007669"/>
    <property type="project" value="UniProtKB-SubCell"/>
</dbReference>
<dbReference type="GO" id="GO:0019064">
    <property type="term" value="P:fusion of virus membrane with host plasma membrane"/>
    <property type="evidence" value="ECO:0007669"/>
    <property type="project" value="UniProtKB-KW"/>
</dbReference>
<dbReference type="GO" id="GO:0046718">
    <property type="term" value="P:symbiont entry into host cell"/>
    <property type="evidence" value="ECO:0007669"/>
    <property type="project" value="UniProtKB-KW"/>
</dbReference>
<dbReference type="InterPro" id="IPR004251">
    <property type="entry name" value="Pox_virus_G9/A16"/>
</dbReference>
<dbReference type="Pfam" id="PF03003">
    <property type="entry name" value="Pox_G9-A16"/>
    <property type="match status" value="1"/>
</dbReference>
<accession>P07611</accession>
<accession>Q76ZT8</accession>
<accession>Q85328</accession>
<keyword id="KW-0002">3D-structure</keyword>
<keyword id="KW-1169">Fusion of virus membrane with host cell membrane</keyword>
<keyword id="KW-1168">Fusion of virus membrane with host membrane</keyword>
<keyword id="KW-0426">Late protein</keyword>
<keyword id="KW-0449">Lipoprotein</keyword>
<keyword id="KW-0472">Membrane</keyword>
<keyword id="KW-0519">Myristate</keyword>
<keyword id="KW-1185">Reference proteome</keyword>
<keyword id="KW-0735">Signal-anchor</keyword>
<keyword id="KW-0812">Transmembrane</keyword>
<keyword id="KW-1133">Transmembrane helix</keyword>
<keyword id="KW-0261">Viral envelope protein</keyword>
<keyword id="KW-1162">Viral penetration into host cytoplasm</keyword>
<keyword id="KW-0946">Virion</keyword>
<keyword id="KW-1160">Virus entry into host cell</keyword>
<proteinExistence type="evidence at protein level"/>
<organism>
    <name type="scientific">Vaccinia virus (strain Western Reserve)</name>
    <name type="common">VACV</name>
    <name type="synonym">Vaccinia virus (strain WR)</name>
    <dbReference type="NCBI Taxonomy" id="10254"/>
    <lineage>
        <taxon>Viruses</taxon>
        <taxon>Varidnaviria</taxon>
        <taxon>Bamfordvirae</taxon>
        <taxon>Nucleocytoviricota</taxon>
        <taxon>Pokkesviricetes</taxon>
        <taxon>Chitovirales</taxon>
        <taxon>Poxviridae</taxon>
        <taxon>Chordopoxvirinae</taxon>
        <taxon>Orthopoxvirus</taxon>
        <taxon>Vaccinia virus</taxon>
    </lineage>
</organism>
<comment type="function">
    <text evidence="3 4 7">Component of the entry fusion complex (EFC), which consists of 11 proteins. During cell infection, this complex mediates entry of the virion core into the host cytoplasm by a two-step mechanism consisting of lipid mixing of the viral and cellular membranes and subsequent pore formation.</text>
</comment>
<comment type="subunit">
    <text evidence="3 5 7">Interacts with OPG143/A16 (PubMed:18353946). Component of the entry fusion complex (EFC) composed of OPG053/F9, OPG076/O3, OPG086/G3, OPG094/G9, OPG095/L1, OPG099/L5, OPG107/H2, OPG143/A16, OPG104/J5, OPG147/A21 and OPG155/A28 (PubMed:16339313, PubMed:34076488). Except for OPG095/L1 and OPG053/F9, each of the EFC proteins is required for assembly or stability of the complex (PubMed:34076488).</text>
</comment>
<comment type="subcellular location">
    <subcellularLocation>
        <location evidence="10">Virion membrane</location>
        <topology evidence="9">Single-pass type II membrane protein</topology>
    </subcellularLocation>
    <text evidence="4 10">Component of the mature virion (MV) membrane. The mature virion is located in the cytoplasm of infected cells and is probably released by cell lysis.</text>
</comment>
<comment type="induction">
    <text evidence="6">Expressed in the late phase of the viral replicative cycle.</text>
</comment>
<comment type="PTM">
    <text evidence="10">Unglycosylated because produced in viral factories instead of the classic ER -Golgi route.</text>
</comment>
<comment type="similarity">
    <text evidence="9">Belongs to the orthopoxvirus OPG086 family.</text>
</comment>
<evidence type="ECO:0000255" key="1"/>
<evidence type="ECO:0000256" key="2">
    <source>
        <dbReference type="SAM" id="MobiDB-lite"/>
    </source>
</evidence>
<evidence type="ECO:0000269" key="3">
    <source>
    </source>
</evidence>
<evidence type="ECO:0000269" key="4">
    <source>
    </source>
</evidence>
<evidence type="ECO:0000269" key="5">
    <source>
    </source>
</evidence>
<evidence type="ECO:0000269" key="6">
    <source>
    </source>
</evidence>
<evidence type="ECO:0000269" key="7">
    <source>
    </source>
</evidence>
<evidence type="ECO:0000269" key="8">
    <source>
    </source>
</evidence>
<evidence type="ECO:0000305" key="9"/>
<evidence type="ECO:0000305" key="10">
    <source>
    </source>
</evidence>
<evidence type="ECO:0007829" key="11">
    <source>
        <dbReference type="PDB" id="8GP6"/>
    </source>
</evidence>
<feature type="initiator methionine" description="Removed; by host">
    <location>
        <position position="1"/>
    </location>
</feature>
<feature type="chain" id="PRO_0000099543" description="Entry-fusion complex protein OPG094">
    <location>
        <begin position="2"/>
        <end position="340"/>
    </location>
</feature>
<feature type="topological domain" description="Virion surface">
    <location>
        <begin position="2"/>
        <end position="319"/>
    </location>
</feature>
<feature type="transmembrane region" description="Helical; Signal-anchor for type II membrane protein" evidence="1">
    <location>
        <begin position="320"/>
        <end position="340"/>
    </location>
</feature>
<feature type="region of interest" description="Disordered" evidence="2">
    <location>
        <begin position="1"/>
        <end position="20"/>
    </location>
</feature>
<feature type="lipid moiety-binding region" description="N-myristoyl glycine; by host" evidence="8">
    <location>
        <position position="2"/>
    </location>
</feature>
<feature type="mutagenesis site" description="Complete loss of myristoylation." evidence="8">
    <original>G</original>
    <variation>A</variation>
    <location>
        <position position="2"/>
    </location>
</feature>
<feature type="sequence conflict" description="In Ref. 2; CAA26009." evidence="9" ref="2">
    <original>F</original>
    <variation>S</variation>
    <location>
        <position position="140"/>
    </location>
</feature>
<feature type="sequence conflict" description="In Ref. 2; CAA26009." evidence="9" ref="2">
    <original>L</original>
    <variation>S</variation>
    <location>
        <position position="320"/>
    </location>
</feature>
<feature type="helix" evidence="11">
    <location>
        <begin position="21"/>
        <end position="24"/>
    </location>
</feature>
<feature type="helix" evidence="11">
    <location>
        <begin position="27"/>
        <end position="29"/>
    </location>
</feature>
<feature type="helix" evidence="11">
    <location>
        <begin position="31"/>
        <end position="34"/>
    </location>
</feature>
<feature type="strand" evidence="11">
    <location>
        <begin position="42"/>
        <end position="47"/>
    </location>
</feature>
<feature type="helix" evidence="11">
    <location>
        <begin position="50"/>
        <end position="52"/>
    </location>
</feature>
<feature type="helix" evidence="11">
    <location>
        <begin position="53"/>
        <end position="59"/>
    </location>
</feature>
<feature type="strand" evidence="11">
    <location>
        <begin position="63"/>
        <end position="67"/>
    </location>
</feature>
<feature type="strand" evidence="11">
    <location>
        <begin position="73"/>
        <end position="78"/>
    </location>
</feature>
<feature type="helix" evidence="11">
    <location>
        <begin position="85"/>
        <end position="88"/>
    </location>
</feature>
<feature type="strand" evidence="11">
    <location>
        <begin position="95"/>
        <end position="100"/>
    </location>
</feature>
<feature type="strand" evidence="11">
    <location>
        <begin position="103"/>
        <end position="107"/>
    </location>
</feature>
<feature type="strand" evidence="11">
    <location>
        <begin position="113"/>
        <end position="116"/>
    </location>
</feature>
<feature type="helix" evidence="11">
    <location>
        <begin position="121"/>
        <end position="124"/>
    </location>
</feature>
<feature type="helix" evidence="11">
    <location>
        <begin position="128"/>
        <end position="135"/>
    </location>
</feature>
<feature type="helix" evidence="11">
    <location>
        <begin position="142"/>
        <end position="153"/>
    </location>
</feature>
<feature type="helix" evidence="11">
    <location>
        <begin position="154"/>
        <end position="157"/>
    </location>
</feature>
<feature type="helix" evidence="11">
    <location>
        <begin position="160"/>
        <end position="179"/>
    </location>
</feature>
<feature type="helix" evidence="11">
    <location>
        <begin position="184"/>
        <end position="196"/>
    </location>
</feature>
<feature type="helix" evidence="11">
    <location>
        <begin position="199"/>
        <end position="209"/>
    </location>
</feature>
<feature type="helix" evidence="11">
    <location>
        <begin position="214"/>
        <end position="220"/>
    </location>
</feature>
<feature type="turn" evidence="11">
    <location>
        <begin position="222"/>
        <end position="224"/>
    </location>
</feature>
<feature type="helix" evidence="11">
    <location>
        <begin position="228"/>
        <end position="236"/>
    </location>
</feature>
<feature type="helix" evidence="11">
    <location>
        <begin position="241"/>
        <end position="243"/>
    </location>
</feature>
<feature type="helix" evidence="11">
    <location>
        <begin position="246"/>
        <end position="250"/>
    </location>
</feature>
<feature type="helix" evidence="11">
    <location>
        <begin position="253"/>
        <end position="255"/>
    </location>
</feature>
<feature type="helix" evidence="11">
    <location>
        <begin position="258"/>
        <end position="264"/>
    </location>
</feature>
<gene>
    <name type="primary">OPG094</name>
    <name type="ordered locus">VACWR087</name>
    <name type="ORF">G9R</name>
</gene>
<sequence length="340" mass="38786">MGGGVSVELPKRDPPPGVPTDEMLLNVDKMHDVIAPAKLLEYVHIGPLAKDKEDKVKKRYPEFRLVNTGPGGLSALLRQSYNGTAPNCCRTFNRTHYWKKDGKISDKYEEGAVLESCWPDVHDTGKCDVDLFDWCQGDTFDRNICHQWIGSAFNRSNRTVEGQQSLINLYNKMQTLCSKDASVPICESFLHHLRAHNTEDSKEMIDYILRQQSADFKQKYMRCSYPTRDKLEESLKYAEPRECWDPECSNANVNFLLTRNYNNLGLCNIVRCNTSVNNLQMDKTSSLRLSCGLSNSDRFSTVPVNRAKVVQHNIKHSFDLKLHLISLLSLLVIWILIVAI</sequence>
<name>PG094_VACCW</name>